<keyword id="KW-0501">Molybdenum cofactor biosynthesis</keyword>
<keyword id="KW-0808">Transferase</keyword>
<comment type="function">
    <text evidence="1">Converts molybdopterin precursor Z into molybdopterin. This requires the incorporation of two sulfur atoms into precursor Z to generate a dithiolene group. The sulfur is provided by MoaD (By similarity).</text>
</comment>
<comment type="catalytic activity">
    <reaction>
        <text>2 [molybdopterin-synthase sulfur-carrier protein]-C-terminal-Gly-aminoethanethioate + cyclic pyranopterin phosphate + H2O = molybdopterin + 2 [molybdopterin-synthase sulfur-carrier protein]-C-terminal Gly-Gly + 2 H(+)</text>
        <dbReference type="Rhea" id="RHEA:26333"/>
        <dbReference type="Rhea" id="RHEA-COMP:12202"/>
        <dbReference type="Rhea" id="RHEA-COMP:19907"/>
        <dbReference type="ChEBI" id="CHEBI:15377"/>
        <dbReference type="ChEBI" id="CHEBI:15378"/>
        <dbReference type="ChEBI" id="CHEBI:58698"/>
        <dbReference type="ChEBI" id="CHEBI:59648"/>
        <dbReference type="ChEBI" id="CHEBI:90778"/>
        <dbReference type="ChEBI" id="CHEBI:232372"/>
        <dbReference type="EC" id="2.8.1.12"/>
    </reaction>
</comment>
<comment type="pathway">
    <text>Cofactor biosynthesis; molybdopterin biosynthesis.</text>
</comment>
<comment type="subunit">
    <text evidence="1">Heterotetramer of 2 MoaD subunits and 2 MoaE subunits. Also stable as homodimer. The enzyme changes between these two forms during catalysis (By similarity).</text>
</comment>
<comment type="similarity">
    <text evidence="2">Belongs to the MoaE family.</text>
</comment>
<accession>Q8NVA3</accession>
<evidence type="ECO:0000250" key="1"/>
<evidence type="ECO:0000305" key="2"/>
<sequence>MKQFEIVTEPIQTEQYREFTINEYQGAVVVFTGHVREWTKGVKTEYLEYEAYIPMAEKKLAQIGDEINEKWPGTITSIVHRIGPLQISDIAVLIAVSSPHRKDAYRANEYAIERIKEIVPIWKKEIWEDGSKWQGHQKGNYEEAKREE</sequence>
<protein>
    <recommendedName>
        <fullName>Molybdopterin synthase catalytic subunit</fullName>
        <ecNumber>2.8.1.12</ecNumber>
    </recommendedName>
    <alternativeName>
        <fullName>MPT synthase subunit 2</fullName>
    </alternativeName>
    <alternativeName>
        <fullName>Molybdenum cofactor biosynthesis protein E</fullName>
    </alternativeName>
    <alternativeName>
        <fullName>Molybdopterin-converting factor large subunit</fullName>
    </alternativeName>
    <alternativeName>
        <fullName>Molybdopterin-converting factor subunit 2</fullName>
    </alternativeName>
</protein>
<name>MOAE_STAAW</name>
<dbReference type="EC" id="2.8.1.12"/>
<dbReference type="EMBL" id="BA000033">
    <property type="protein sequence ID" value="BAB96054.1"/>
    <property type="molecule type" value="Genomic_DNA"/>
</dbReference>
<dbReference type="RefSeq" id="WP_000808500.1">
    <property type="nucleotide sequence ID" value="NC_003923.1"/>
</dbReference>
<dbReference type="SMR" id="Q8NVA3"/>
<dbReference type="KEGG" id="sam:MW2189"/>
<dbReference type="HOGENOM" id="CLU_089568_1_2_9"/>
<dbReference type="UniPathway" id="UPA00344"/>
<dbReference type="GO" id="GO:0030366">
    <property type="term" value="F:molybdopterin synthase activity"/>
    <property type="evidence" value="ECO:0007669"/>
    <property type="project" value="UniProtKB-EC"/>
</dbReference>
<dbReference type="GO" id="GO:0006777">
    <property type="term" value="P:Mo-molybdopterin cofactor biosynthetic process"/>
    <property type="evidence" value="ECO:0007669"/>
    <property type="project" value="UniProtKB-KW"/>
</dbReference>
<dbReference type="CDD" id="cd00756">
    <property type="entry name" value="MoaE"/>
    <property type="match status" value="1"/>
</dbReference>
<dbReference type="FunFam" id="3.90.1170.40:FF:000003">
    <property type="entry name" value="Molybdopterin converting factor subunit 2"/>
    <property type="match status" value="1"/>
</dbReference>
<dbReference type="Gene3D" id="3.90.1170.40">
    <property type="entry name" value="Molybdopterin biosynthesis MoaE subunit"/>
    <property type="match status" value="1"/>
</dbReference>
<dbReference type="InterPro" id="IPR036563">
    <property type="entry name" value="MoaE_sf"/>
</dbReference>
<dbReference type="InterPro" id="IPR003448">
    <property type="entry name" value="Mopterin_biosynth_MoaE"/>
</dbReference>
<dbReference type="PANTHER" id="PTHR23404">
    <property type="entry name" value="MOLYBDOPTERIN SYNTHASE RELATED"/>
    <property type="match status" value="1"/>
</dbReference>
<dbReference type="Pfam" id="PF02391">
    <property type="entry name" value="MoaE"/>
    <property type="match status" value="1"/>
</dbReference>
<dbReference type="SUPFAM" id="SSF54690">
    <property type="entry name" value="Molybdopterin synthase subunit MoaE"/>
    <property type="match status" value="1"/>
</dbReference>
<feature type="chain" id="PRO_0000163102" description="Molybdopterin synthase catalytic subunit">
    <location>
        <begin position="1"/>
        <end position="148"/>
    </location>
</feature>
<feature type="binding site" evidence="1">
    <location>
        <begin position="34"/>
        <end position="36"/>
    </location>
    <ligand>
        <name>substrate</name>
    </ligand>
</feature>
<feature type="binding site" evidence="1">
    <location>
        <position position="44"/>
    </location>
    <ligand>
        <name>substrate</name>
    </ligand>
</feature>
<feature type="binding site" evidence="1">
    <location>
        <begin position="100"/>
        <end position="101"/>
    </location>
    <ligand>
        <name>substrate</name>
    </ligand>
</feature>
<feature type="binding site" evidence="1">
    <location>
        <position position="116"/>
    </location>
    <ligand>
        <name>substrate</name>
    </ligand>
</feature>
<feature type="binding site" evidence="1">
    <location>
        <begin position="123"/>
        <end position="125"/>
    </location>
    <ligand>
        <name>substrate</name>
    </ligand>
</feature>
<organism>
    <name type="scientific">Staphylococcus aureus (strain MW2)</name>
    <dbReference type="NCBI Taxonomy" id="196620"/>
    <lineage>
        <taxon>Bacteria</taxon>
        <taxon>Bacillati</taxon>
        <taxon>Bacillota</taxon>
        <taxon>Bacilli</taxon>
        <taxon>Bacillales</taxon>
        <taxon>Staphylococcaceae</taxon>
        <taxon>Staphylococcus</taxon>
    </lineage>
</organism>
<gene>
    <name type="primary">moaE</name>
    <name type="ordered locus">MW2189</name>
</gene>
<reference key="1">
    <citation type="journal article" date="2002" name="Lancet">
        <title>Genome and virulence determinants of high virulence community-acquired MRSA.</title>
        <authorList>
            <person name="Baba T."/>
            <person name="Takeuchi F."/>
            <person name="Kuroda M."/>
            <person name="Yuzawa H."/>
            <person name="Aoki K."/>
            <person name="Oguchi A."/>
            <person name="Nagai Y."/>
            <person name="Iwama N."/>
            <person name="Asano K."/>
            <person name="Naimi T."/>
            <person name="Kuroda H."/>
            <person name="Cui L."/>
            <person name="Yamamoto K."/>
            <person name="Hiramatsu K."/>
        </authorList>
    </citation>
    <scope>NUCLEOTIDE SEQUENCE [LARGE SCALE GENOMIC DNA]</scope>
    <source>
        <strain>MW2</strain>
    </source>
</reference>
<proteinExistence type="inferred from homology"/>